<protein>
    <recommendedName>
        <fullName evidence="3">Crotamine CRO3</fullName>
    </recommendedName>
</protein>
<keyword id="KW-0929">Antimicrobial</keyword>
<keyword id="KW-1015">Disulfide bond</keyword>
<keyword id="KW-0872">Ion channel impairing toxin</keyword>
<keyword id="KW-0959">Myotoxin</keyword>
<keyword id="KW-0528">Neurotoxin</keyword>
<keyword id="KW-0632">Potassium channel impairing toxin</keyword>
<keyword id="KW-0964">Secreted</keyword>
<keyword id="KW-0732">Signal</keyword>
<keyword id="KW-0800">Toxin</keyword>
<keyword id="KW-1220">Voltage-gated potassium channel impairing toxin</keyword>
<evidence type="ECO:0000250" key="1"/>
<evidence type="ECO:0000250" key="2">
    <source>
        <dbReference type="UniProtKB" id="Q9PWF3"/>
    </source>
</evidence>
<evidence type="ECO:0000303" key="3">
    <source>
    </source>
</evidence>
<evidence type="ECO:0000305" key="4"/>
<evidence type="ECO:0000305" key="5">
    <source>
    </source>
</evidence>
<name>MYC3_CRODU</name>
<proteinExistence type="inferred from homology"/>
<accession>O73799</accession>
<feature type="signal peptide" evidence="2">
    <location>
        <begin position="1"/>
        <end position="22"/>
    </location>
</feature>
<feature type="chain" id="PRO_0000035185" description="Crotamine CRO3">
    <location>
        <begin position="23"/>
        <end position="64"/>
    </location>
</feature>
<feature type="disulfide bond" evidence="2">
    <location>
        <begin position="25"/>
        <end position="57"/>
    </location>
</feature>
<feature type="disulfide bond" evidence="2">
    <location>
        <begin position="32"/>
        <end position="51"/>
    </location>
</feature>
<feature type="disulfide bond" evidence="2">
    <location>
        <begin position="39"/>
        <end position="58"/>
    </location>
</feature>
<comment type="function">
    <text evidence="2">Cationic peptide that possesses multiple functions. It acts as a cell-penetrating peptide (CPP), and as a potent voltage-gated potassium channel (Kv) inhibitor. It exhibits antimicrobial activities, hind limb paralysis, and severe muscle necrosis by a non-enzymatic mechanism.</text>
</comment>
<comment type="subunit">
    <text evidence="1">Monomer.</text>
</comment>
<comment type="subcellular location">
    <subcellularLocation>
        <location evidence="5">Secreted</location>
    </subcellularLocation>
</comment>
<comment type="tissue specificity">
    <text evidence="5">Expressed by the venom gland.</text>
</comment>
<comment type="similarity">
    <text evidence="4">Belongs to the crotamine-myotoxin family.</text>
</comment>
<reference key="1">
    <citation type="journal article" date="1999" name="Toxicon">
        <title>Nucleotide sequence of crotamine isoform precursors from a single South American rattlesnake (Crotalus durissus terrificus).</title>
        <authorList>
            <person name="Radis-Baptista G."/>
            <person name="Oguiura N."/>
            <person name="Hayashi M.A.F."/>
            <person name="Camargo M.E."/>
            <person name="Grego K.F."/>
            <person name="Oliveira E.B."/>
            <person name="Yamane T."/>
        </authorList>
    </citation>
    <scope>NUCLEOTIDE SEQUENCE [MRNA]</scope>
    <source>
        <strain>Martinopolis</strain>
        <tissue>Venom gland</tissue>
    </source>
</reference>
<organism>
    <name type="scientific">Crotalus durissus terrificus</name>
    <name type="common">South American rattlesnake</name>
    <dbReference type="NCBI Taxonomy" id="8732"/>
    <lineage>
        <taxon>Eukaryota</taxon>
        <taxon>Metazoa</taxon>
        <taxon>Chordata</taxon>
        <taxon>Craniata</taxon>
        <taxon>Vertebrata</taxon>
        <taxon>Euteleostomi</taxon>
        <taxon>Lepidosauria</taxon>
        <taxon>Squamata</taxon>
        <taxon>Bifurcata</taxon>
        <taxon>Unidentata</taxon>
        <taxon>Episquamata</taxon>
        <taxon>Toxicofera</taxon>
        <taxon>Serpentes</taxon>
        <taxon>Colubroidea</taxon>
        <taxon>Viperidae</taxon>
        <taxon>Crotalinae</taxon>
        <taxon>Crotalus</taxon>
    </lineage>
</organism>
<dbReference type="EMBL" id="AF055988">
    <property type="protein sequence ID" value="AAC19036.1"/>
    <property type="molecule type" value="mRNA"/>
</dbReference>
<dbReference type="BMRB" id="O73799"/>
<dbReference type="SMR" id="O73799"/>
<dbReference type="GO" id="GO:0005576">
    <property type="term" value="C:extracellular region"/>
    <property type="evidence" value="ECO:0007669"/>
    <property type="project" value="UniProtKB-SubCell"/>
</dbReference>
<dbReference type="GO" id="GO:0015459">
    <property type="term" value="F:potassium channel regulator activity"/>
    <property type="evidence" value="ECO:0007669"/>
    <property type="project" value="UniProtKB-KW"/>
</dbReference>
<dbReference type="GO" id="GO:0090729">
    <property type="term" value="F:toxin activity"/>
    <property type="evidence" value="ECO:0007669"/>
    <property type="project" value="UniProtKB-KW"/>
</dbReference>
<dbReference type="GO" id="GO:0044564">
    <property type="term" value="P:envenomation resulting in occlusion of the pore of voltage-gated potassium channel in another organism"/>
    <property type="evidence" value="ECO:0000250"/>
    <property type="project" value="UniProtKB"/>
</dbReference>
<dbReference type="FunFam" id="2.20.20.10:FF:000001">
    <property type="entry name" value="Crotamine"/>
    <property type="match status" value="1"/>
</dbReference>
<dbReference type="Gene3D" id="2.20.20.10">
    <property type="entry name" value="Anthopleurin-A"/>
    <property type="match status" value="1"/>
</dbReference>
<dbReference type="InterPro" id="IPR023355">
    <property type="entry name" value="Myo_ane_neurotoxin_sf"/>
</dbReference>
<dbReference type="InterPro" id="IPR000881">
    <property type="entry name" value="Myotoxin"/>
</dbReference>
<dbReference type="Pfam" id="PF00819">
    <property type="entry name" value="Myotoxins"/>
    <property type="match status" value="1"/>
</dbReference>
<dbReference type="PRINTS" id="PR00283">
    <property type="entry name" value="MYOTOXIN"/>
</dbReference>
<dbReference type="SUPFAM" id="SSF57392">
    <property type="entry name" value="Defensin-like"/>
    <property type="match status" value="1"/>
</dbReference>
<dbReference type="PROSITE" id="PS00459">
    <property type="entry name" value="MYOTOXINS_1"/>
    <property type="match status" value="1"/>
</dbReference>
<dbReference type="PROSITE" id="PS51345">
    <property type="entry name" value="MYOTOXINS_2"/>
    <property type="match status" value="1"/>
</dbReference>
<gene>
    <name type="primary">CRO3</name>
</gene>
<sequence>MILYLLFAFLFLAFLSEPGNAYKQCHKKGGHCFPKEKICIPPSSDFGKMDCRWRWKCCKKGSGK</sequence>